<reference key="1">
    <citation type="journal article" date="2011" name="Genome Biol.">
        <title>Comparative and functional genomics provide insights into the pathogenicity of dermatophytic fungi.</title>
        <authorList>
            <person name="Burmester A."/>
            <person name="Shelest E."/>
            <person name="Gloeckner G."/>
            <person name="Heddergott C."/>
            <person name="Schindler S."/>
            <person name="Staib P."/>
            <person name="Heidel A."/>
            <person name="Felder M."/>
            <person name="Petzold A."/>
            <person name="Szafranski K."/>
            <person name="Feuermann M."/>
            <person name="Pedruzzi I."/>
            <person name="Priebe S."/>
            <person name="Groth M."/>
            <person name="Winkler R."/>
            <person name="Li W."/>
            <person name="Kniemeyer O."/>
            <person name="Schroeckh V."/>
            <person name="Hertweck C."/>
            <person name="Hube B."/>
            <person name="White T.C."/>
            <person name="Platzer M."/>
            <person name="Guthke R."/>
            <person name="Heitman J."/>
            <person name="Woestemeyer J."/>
            <person name="Zipfel P.F."/>
            <person name="Monod M."/>
            <person name="Brakhage A.A."/>
        </authorList>
    </citation>
    <scope>NUCLEOTIDE SEQUENCE [LARGE SCALE GENOMIC DNA]</scope>
    <source>
        <strain>ATCC MYA-4681 / CBS 112371</strain>
    </source>
</reference>
<sequence length="294" mass="32042">MRFSVVFAAIAALSSVVTAERGCGAIPHKGFATELMEAMDNARASSFSNTTAANVTINTYFHVITDGNKGQINNDTLQKQIEVLNKDYSGTGFSFKLVGSERTNNAGWASGNDDFGMKSSLRKGGYDSLNVYFVPMLREGLLGFCHFPTKNPGKRQLIMDGCVINSNTVPGGSAQNYDEGRTTTHEVGHFMGLYHVFNDNGGGCQQDGDMVDDTPVQSKPSSGCPKGKDSCPQQGVDSIHNYMDYSYDSCLNEFSPGQIQRMQMLWKQFRAGNSNRSPKAMKPIIPSYVSDPVM</sequence>
<protein>
    <recommendedName>
        <fullName>Extracellular metalloprotease ARB_07495</fullName>
        <ecNumber>3.4.24.-</ecNumber>
    </recommendedName>
</protein>
<proteinExistence type="inferred from homology"/>
<accession>D4ATD1</accession>
<keyword id="KW-1015">Disulfide bond</keyword>
<keyword id="KW-0325">Glycoprotein</keyword>
<keyword id="KW-0378">Hydrolase</keyword>
<keyword id="KW-0479">Metal-binding</keyword>
<keyword id="KW-0482">Metalloprotease</keyword>
<keyword id="KW-0645">Protease</keyword>
<keyword id="KW-1185">Reference proteome</keyword>
<keyword id="KW-0964">Secreted</keyword>
<keyword id="KW-0732">Signal</keyword>
<keyword id="KW-0843">Virulence</keyword>
<keyword id="KW-0862">Zinc</keyword>
<gene>
    <name type="ORF">ARB_07495</name>
</gene>
<evidence type="ECO:0000250" key="1"/>
<evidence type="ECO:0000255" key="2"/>
<evidence type="ECO:0000255" key="3">
    <source>
        <dbReference type="PROSITE-ProRule" id="PRU10095"/>
    </source>
</evidence>
<evidence type="ECO:0000305" key="4"/>
<feature type="signal peptide" evidence="2">
    <location>
        <begin position="1"/>
        <end position="19"/>
    </location>
</feature>
<feature type="chain" id="PRO_0000407214" description="Extracellular metalloprotease ARB_07495">
    <location>
        <begin position="20"/>
        <end position="294"/>
    </location>
</feature>
<feature type="active site" evidence="3">
    <location>
        <position position="186"/>
    </location>
</feature>
<feature type="binding site" evidence="3">
    <location>
        <position position="185"/>
    </location>
    <ligand>
        <name>Zn(2+)</name>
        <dbReference type="ChEBI" id="CHEBI:29105"/>
        <note>catalytic</note>
    </ligand>
</feature>
<feature type="binding site" evidence="3">
    <location>
        <position position="189"/>
    </location>
    <ligand>
        <name>Zn(2+)</name>
        <dbReference type="ChEBI" id="CHEBI:29105"/>
        <note>catalytic</note>
    </ligand>
</feature>
<feature type="glycosylation site" description="N-linked (GlcNAc...) asparagine" evidence="2">
    <location>
        <position position="49"/>
    </location>
</feature>
<feature type="glycosylation site" description="N-linked (GlcNAc...) asparagine" evidence="2">
    <location>
        <position position="54"/>
    </location>
</feature>
<feature type="glycosylation site" description="N-linked (GlcNAc...) asparagine" evidence="2">
    <location>
        <position position="74"/>
    </location>
</feature>
<feature type="disulfide bond" evidence="1">
    <location>
        <begin position="224"/>
        <end position="250"/>
    </location>
</feature>
<comment type="function">
    <text evidence="1">Secreted metalloproteinase that allows assimilation of proteinaceous substrates. Plays a pivotal role as a pathogenicity determinant during infections and contributes to the ability of the pathogen to persist within the mammalian host (By similarity).</text>
</comment>
<comment type="subcellular location">
    <subcellularLocation>
        <location evidence="1">Secreted</location>
    </subcellularLocation>
</comment>
<comment type="similarity">
    <text evidence="4">Belongs to the peptidase M43B family.</text>
</comment>
<organism>
    <name type="scientific">Arthroderma benhamiae (strain ATCC MYA-4681 / CBS 112371)</name>
    <name type="common">Trichophyton mentagrophytes</name>
    <dbReference type="NCBI Taxonomy" id="663331"/>
    <lineage>
        <taxon>Eukaryota</taxon>
        <taxon>Fungi</taxon>
        <taxon>Dikarya</taxon>
        <taxon>Ascomycota</taxon>
        <taxon>Pezizomycotina</taxon>
        <taxon>Eurotiomycetes</taxon>
        <taxon>Eurotiomycetidae</taxon>
        <taxon>Onygenales</taxon>
        <taxon>Arthrodermataceae</taxon>
        <taxon>Trichophyton</taxon>
    </lineage>
</organism>
<name>MEP7_ARTBC</name>
<dbReference type="EC" id="3.4.24.-"/>
<dbReference type="EMBL" id="ABSU01000009">
    <property type="protein sequence ID" value="EFE33550.1"/>
    <property type="molecule type" value="Genomic_DNA"/>
</dbReference>
<dbReference type="RefSeq" id="XP_003014190.1">
    <property type="nucleotide sequence ID" value="XM_003014144.1"/>
</dbReference>
<dbReference type="SMR" id="D4ATD1"/>
<dbReference type="MEROPS" id="M43.008"/>
<dbReference type="GeneID" id="9521608"/>
<dbReference type="KEGG" id="abe:ARB_07495"/>
<dbReference type="eggNOG" id="ENOG502S6EM">
    <property type="taxonomic scope" value="Eukaryota"/>
</dbReference>
<dbReference type="HOGENOM" id="CLU_048726_0_0_1"/>
<dbReference type="OMA" id="DTWFHII"/>
<dbReference type="OrthoDB" id="536211at2759"/>
<dbReference type="Proteomes" id="UP000008866">
    <property type="component" value="Unassembled WGS sequence"/>
</dbReference>
<dbReference type="GO" id="GO:0005576">
    <property type="term" value="C:extracellular region"/>
    <property type="evidence" value="ECO:0007669"/>
    <property type="project" value="UniProtKB-SubCell"/>
</dbReference>
<dbReference type="GO" id="GO:0046872">
    <property type="term" value="F:metal ion binding"/>
    <property type="evidence" value="ECO:0007669"/>
    <property type="project" value="UniProtKB-KW"/>
</dbReference>
<dbReference type="GO" id="GO:0008237">
    <property type="term" value="F:metallopeptidase activity"/>
    <property type="evidence" value="ECO:0007669"/>
    <property type="project" value="UniProtKB-KW"/>
</dbReference>
<dbReference type="GO" id="GO:0006508">
    <property type="term" value="P:proteolysis"/>
    <property type="evidence" value="ECO:0007669"/>
    <property type="project" value="UniProtKB-KW"/>
</dbReference>
<dbReference type="CDD" id="cd04275">
    <property type="entry name" value="ZnMc_pappalysin_like"/>
    <property type="match status" value="1"/>
</dbReference>
<dbReference type="Gene3D" id="3.40.390.10">
    <property type="entry name" value="Collagenase (Catalytic Domain)"/>
    <property type="match status" value="1"/>
</dbReference>
<dbReference type="InterPro" id="IPR024079">
    <property type="entry name" value="MetalloPept_cat_dom_sf"/>
</dbReference>
<dbReference type="InterPro" id="IPR008754">
    <property type="entry name" value="Peptidase_M43"/>
</dbReference>
<dbReference type="PANTHER" id="PTHR47466">
    <property type="match status" value="1"/>
</dbReference>
<dbReference type="PANTHER" id="PTHR47466:SF1">
    <property type="entry name" value="METALLOPROTEASE MEP1 (AFU_ORTHOLOGUE AFUA_1G07730)-RELATED"/>
    <property type="match status" value="1"/>
</dbReference>
<dbReference type="Pfam" id="PF05572">
    <property type="entry name" value="Peptidase_M43"/>
    <property type="match status" value="1"/>
</dbReference>
<dbReference type="SUPFAM" id="SSF55486">
    <property type="entry name" value="Metalloproteases ('zincins'), catalytic domain"/>
    <property type="match status" value="1"/>
</dbReference>
<dbReference type="PROSITE" id="PS00142">
    <property type="entry name" value="ZINC_PROTEASE"/>
    <property type="match status" value="1"/>
</dbReference>